<proteinExistence type="inferred from homology"/>
<name>LOLA_ECODH</name>
<comment type="function">
    <text evidence="1">Participates in the translocation of lipoproteins from the inner membrane to the outer membrane. Only forms a complex with a lipoprotein if the residue after the N-terminal Cys is not an aspartate (The Asp acts as a targeting signal to indicate that the lipoprotein should stay in the inner membrane).</text>
</comment>
<comment type="subunit">
    <text evidence="1">Monomer.</text>
</comment>
<comment type="subcellular location">
    <subcellularLocation>
        <location evidence="1">Periplasm</location>
    </subcellularLocation>
</comment>
<comment type="similarity">
    <text evidence="1">Belongs to the LolA family.</text>
</comment>
<reference key="1">
    <citation type="journal article" date="2008" name="J. Bacteriol.">
        <title>The complete genome sequence of Escherichia coli DH10B: insights into the biology of a laboratory workhorse.</title>
        <authorList>
            <person name="Durfee T."/>
            <person name="Nelson R."/>
            <person name="Baldwin S."/>
            <person name="Plunkett G. III"/>
            <person name="Burland V."/>
            <person name="Mau B."/>
            <person name="Petrosino J.F."/>
            <person name="Qin X."/>
            <person name="Muzny D.M."/>
            <person name="Ayele M."/>
            <person name="Gibbs R.A."/>
            <person name="Csorgo B."/>
            <person name="Posfai G."/>
            <person name="Weinstock G.M."/>
            <person name="Blattner F.R."/>
        </authorList>
    </citation>
    <scope>NUCLEOTIDE SEQUENCE [LARGE SCALE GENOMIC DNA]</scope>
    <source>
        <strain>K12 / DH10B</strain>
    </source>
</reference>
<organism>
    <name type="scientific">Escherichia coli (strain K12 / DH10B)</name>
    <dbReference type="NCBI Taxonomy" id="316385"/>
    <lineage>
        <taxon>Bacteria</taxon>
        <taxon>Pseudomonadati</taxon>
        <taxon>Pseudomonadota</taxon>
        <taxon>Gammaproteobacteria</taxon>
        <taxon>Enterobacterales</taxon>
        <taxon>Enterobacteriaceae</taxon>
        <taxon>Escherichia</taxon>
    </lineage>
</organism>
<keyword id="KW-0143">Chaperone</keyword>
<keyword id="KW-0574">Periplasm</keyword>
<keyword id="KW-0653">Protein transport</keyword>
<keyword id="KW-0732">Signal</keyword>
<keyword id="KW-0813">Transport</keyword>
<sequence>MKKIAITCALLSSLVASSVWADAASDLKSRLDKVSSFHASFTQKVTDGSGAAVQEGQGDLWVKRPNLFNWHMTQPDESILVSDGKTLWFYNPFVEQATATWLKDATGNTPFMLIARNQSSDWQQYNIKQNGDDFVLTPKASNGNLKQFTINVGRDGTIHQFSAVEQDDQRSSYQLKSQQNGAVDAAKFTFTPPQGVTVDDQRK</sequence>
<evidence type="ECO:0000255" key="1">
    <source>
        <dbReference type="HAMAP-Rule" id="MF_00240"/>
    </source>
</evidence>
<protein>
    <recommendedName>
        <fullName evidence="1">Outer-membrane lipoprotein carrier protein</fullName>
    </recommendedName>
</protein>
<accession>B1X831</accession>
<feature type="signal peptide" evidence="1">
    <location>
        <begin position="1"/>
        <end position="21"/>
    </location>
</feature>
<feature type="chain" id="PRO_1000100717" description="Outer-membrane lipoprotein carrier protein">
    <location>
        <begin position="22"/>
        <end position="203"/>
    </location>
</feature>
<dbReference type="EMBL" id="CP000948">
    <property type="protein sequence ID" value="ACB02091.1"/>
    <property type="molecule type" value="Genomic_DNA"/>
</dbReference>
<dbReference type="RefSeq" id="WP_001295343.1">
    <property type="nucleotide sequence ID" value="NC_010473.1"/>
</dbReference>
<dbReference type="BMRB" id="B1X831"/>
<dbReference type="SMR" id="B1X831"/>
<dbReference type="GeneID" id="93776529"/>
<dbReference type="KEGG" id="ecd:ECDH10B_0961"/>
<dbReference type="HOGENOM" id="CLU_087560_1_1_6"/>
<dbReference type="GO" id="GO:0030288">
    <property type="term" value="C:outer membrane-bounded periplasmic space"/>
    <property type="evidence" value="ECO:0007669"/>
    <property type="project" value="TreeGrafter"/>
</dbReference>
<dbReference type="GO" id="GO:0044874">
    <property type="term" value="P:lipoprotein localization to outer membrane"/>
    <property type="evidence" value="ECO:0007669"/>
    <property type="project" value="UniProtKB-UniRule"/>
</dbReference>
<dbReference type="GO" id="GO:0042953">
    <property type="term" value="P:lipoprotein transport"/>
    <property type="evidence" value="ECO:0007669"/>
    <property type="project" value="InterPro"/>
</dbReference>
<dbReference type="CDD" id="cd16325">
    <property type="entry name" value="LolA"/>
    <property type="match status" value="1"/>
</dbReference>
<dbReference type="FunFam" id="2.50.20.10:FF:000001">
    <property type="entry name" value="Outer-membrane lipoprotein carrier protein"/>
    <property type="match status" value="1"/>
</dbReference>
<dbReference type="Gene3D" id="2.50.20.10">
    <property type="entry name" value="Lipoprotein localisation LolA/LolB/LppX"/>
    <property type="match status" value="1"/>
</dbReference>
<dbReference type="HAMAP" id="MF_00240">
    <property type="entry name" value="LolA"/>
    <property type="match status" value="1"/>
</dbReference>
<dbReference type="InterPro" id="IPR029046">
    <property type="entry name" value="LolA/LolB/LppX"/>
</dbReference>
<dbReference type="InterPro" id="IPR004564">
    <property type="entry name" value="OM_lipoprot_carrier_LolA-like"/>
</dbReference>
<dbReference type="InterPro" id="IPR018323">
    <property type="entry name" value="OM_lipoprot_carrier_LolA_Pbac"/>
</dbReference>
<dbReference type="NCBIfam" id="TIGR00547">
    <property type="entry name" value="lolA"/>
    <property type="match status" value="1"/>
</dbReference>
<dbReference type="PANTHER" id="PTHR35869">
    <property type="entry name" value="OUTER-MEMBRANE LIPOPROTEIN CARRIER PROTEIN"/>
    <property type="match status" value="1"/>
</dbReference>
<dbReference type="PANTHER" id="PTHR35869:SF1">
    <property type="entry name" value="OUTER-MEMBRANE LIPOPROTEIN CARRIER PROTEIN"/>
    <property type="match status" value="1"/>
</dbReference>
<dbReference type="Pfam" id="PF03548">
    <property type="entry name" value="LolA"/>
    <property type="match status" value="1"/>
</dbReference>
<dbReference type="SUPFAM" id="SSF89392">
    <property type="entry name" value="Prokaryotic lipoproteins and lipoprotein localization factors"/>
    <property type="match status" value="1"/>
</dbReference>
<gene>
    <name evidence="1" type="primary">lolA</name>
    <name type="ordered locus">ECDH10B_0961</name>
</gene>